<protein>
    <recommendedName>
        <fullName evidence="1">Matrix protein 2</fullName>
    </recommendedName>
    <alternativeName>
        <fullName evidence="1">Proton channel protein M2</fullName>
    </alternativeName>
</protein>
<gene>
    <name evidence="1" type="primary">M</name>
</gene>
<name>M2_I57A0</name>
<dbReference type="EMBL" id="AY210028">
    <property type="protein sequence ID" value="AAO46346.1"/>
    <property type="molecule type" value="Genomic_RNA"/>
</dbReference>
<dbReference type="EMBL" id="DQ508844">
    <property type="protein sequence ID" value="ABF21301.1"/>
    <property type="molecule type" value="Genomic_RNA"/>
</dbReference>
<dbReference type="SMR" id="Q6XU12"/>
<dbReference type="IntAct" id="Q6XU12">
    <property type="interactions" value="1"/>
</dbReference>
<dbReference type="GlyCosmos" id="Q6XU12">
    <property type="glycosylation" value="1 site, No reported glycans"/>
</dbReference>
<dbReference type="Proteomes" id="UP000118104">
    <property type="component" value="Genome"/>
</dbReference>
<dbReference type="GO" id="GO:0020002">
    <property type="term" value="C:host cell plasma membrane"/>
    <property type="evidence" value="ECO:0007669"/>
    <property type="project" value="UniProtKB-SubCell"/>
</dbReference>
<dbReference type="GO" id="GO:0016020">
    <property type="term" value="C:membrane"/>
    <property type="evidence" value="ECO:0007669"/>
    <property type="project" value="UniProtKB-UniRule"/>
</dbReference>
<dbReference type="GO" id="GO:0055036">
    <property type="term" value="C:virion membrane"/>
    <property type="evidence" value="ECO:0007669"/>
    <property type="project" value="UniProtKB-SubCell"/>
</dbReference>
<dbReference type="GO" id="GO:0005216">
    <property type="term" value="F:monoatomic ion channel activity"/>
    <property type="evidence" value="ECO:0007669"/>
    <property type="project" value="UniProtKB-UniRule"/>
</dbReference>
<dbReference type="GO" id="GO:0015078">
    <property type="term" value="F:proton transmembrane transporter activity"/>
    <property type="evidence" value="ECO:0007669"/>
    <property type="project" value="UniProtKB-UniRule"/>
</dbReference>
<dbReference type="GO" id="GO:0051259">
    <property type="term" value="P:protein complex oligomerization"/>
    <property type="evidence" value="ECO:0007669"/>
    <property type="project" value="UniProtKB-UniRule"/>
</dbReference>
<dbReference type="GO" id="GO:0044694">
    <property type="term" value="P:symbiont genome entry into host cell via pore formation in plasma membrane"/>
    <property type="evidence" value="ECO:0007669"/>
    <property type="project" value="UniProtKB-UniRule"/>
</dbReference>
<dbReference type="GO" id="GO:0140321">
    <property type="term" value="P:symbiont-mediated suppression of host autophagy"/>
    <property type="evidence" value="ECO:0007669"/>
    <property type="project" value="UniProtKB-KW"/>
</dbReference>
<dbReference type="Gene3D" id="6.10.250.1640">
    <property type="match status" value="1"/>
</dbReference>
<dbReference type="HAMAP" id="MF_04069">
    <property type="entry name" value="INFV_M2"/>
    <property type="match status" value="1"/>
</dbReference>
<dbReference type="InterPro" id="IPR002089">
    <property type="entry name" value="Flu_M2"/>
</dbReference>
<dbReference type="Pfam" id="PF00599">
    <property type="entry name" value="Flu_M2"/>
    <property type="match status" value="1"/>
</dbReference>
<keyword id="KW-0025">Alternative splicing</keyword>
<keyword id="KW-1015">Disulfide bond</keyword>
<keyword id="KW-0325">Glycoprotein</keyword>
<keyword id="KW-1032">Host cell membrane</keyword>
<keyword id="KW-1043">Host membrane</keyword>
<keyword id="KW-0945">Host-virus interaction</keyword>
<keyword id="KW-0375">Hydrogen ion transport</keyword>
<keyword id="KW-1083">Inhibition of host autophagy by virus</keyword>
<keyword id="KW-0407">Ion channel</keyword>
<keyword id="KW-0406">Ion transport</keyword>
<keyword id="KW-0449">Lipoprotein</keyword>
<keyword id="KW-0472">Membrane</keyword>
<keyword id="KW-0564">Palmitate</keyword>
<keyword id="KW-0597">Phosphoprotein</keyword>
<keyword id="KW-0735">Signal-anchor</keyword>
<keyword id="KW-0812">Transmembrane</keyword>
<keyword id="KW-1133">Transmembrane helix</keyword>
<keyword id="KW-0813">Transport</keyword>
<keyword id="KW-1182">Viral ion channel</keyword>
<keyword id="KW-0946">Virion</keyword>
<reference key="1">
    <citation type="journal article" date="2004" name="Virology">
        <title>Genetic analysis of human H2N2 and early H3N2 influenza viruses, 1957-1972: evidence for genetic divergence and multiple reassortment events.</title>
        <authorList>
            <person name="Lindstrom S.E."/>
            <person name="Cox N.J."/>
            <person name="Klimov A."/>
        </authorList>
    </citation>
    <scope>NUCLEOTIDE SEQUENCE [GENOMIC RNA]</scope>
</reference>
<reference key="2">
    <citation type="submission" date="2006-04" db="EMBL/GenBank/DDBJ databases">
        <title>Complete genome sequencing and analysis of selected Influenza Virus vaccine strains spanning six decades (1933-1999).</title>
        <authorList>
            <person name="Mbawuike I.N."/>
            <person name="Zhang Y."/>
            <person name="Yamada R.E."/>
            <person name="Nino D."/>
            <person name="Bui H.-H."/>
            <person name="Sette A."/>
            <person name="Couch R.B."/>
        </authorList>
    </citation>
    <scope>NUCLEOTIDE SEQUENCE [GENOMIC RNA]</scope>
</reference>
<comment type="function">
    <text evidence="1">Forms a proton-selective ion channel that is necessary for the efficient release of the viral genome during virus entry. After attaching to the cell surface, the virion enters the cell by endocytosis. Acidification of the endosome triggers M2 ion channel activity. The influx of protons into virion interior is believed to disrupt interactions between the viral ribonucleoprotein (RNP), matrix protein 1 (M1), and lipid bilayers, thereby freeing the viral genome from interaction with viral proteins and enabling RNA segments to migrate to the host cell nucleus, where influenza virus RNA transcription and replication occur. Also plays a role in viral proteins secretory pathway. Elevates the intravesicular pH of normally acidic compartments, such as trans-Golgi network, preventing newly formed hemagglutinin from premature switching to the fusion-active conformation.</text>
</comment>
<comment type="activity regulation">
    <text>The M2 protein from most influenza A strains is inhibited by amantadine and rimantadine, resulting in viral uncoating incapacity. Emergence of amantadine-resistant variants is usually rapid.</text>
</comment>
<comment type="subunit">
    <text evidence="1">Homotetramer; composed of two disulfide-linked dimers held together by non-covalent interactions. May interact with matrix protein 1.</text>
</comment>
<comment type="subcellular location">
    <subcellularLocation>
        <location evidence="1">Virion membrane</location>
    </subcellularLocation>
    <subcellularLocation>
        <location evidence="1">Host apical cell membrane</location>
        <topology evidence="1">Single-pass type III membrane protein</topology>
    </subcellularLocation>
    <text evidence="1">Abundantly expressed at the apical plasma membrane in infected polarized epithelial cells, in close proximity to budding and assembled virions. Minor component of virions (only 16-20 molecules/virion).</text>
</comment>
<comment type="alternative products">
    <event type="alternative splicing"/>
    <isoform>
        <id>Q6XU12-1</id>
        <name>M2</name>
        <sequence type="displayed"/>
    </isoform>
    <isoform>
        <id>Q6XU11-1</id>
        <name>M1</name>
        <sequence type="external"/>
    </isoform>
    <text>Only the first 9 residues are shared by the 2 isoforms.</text>
</comment>
<comment type="domain">
    <text evidence="1">Cytoplasmic tail plays an important role in virion assembly and morphogenesis.</text>
</comment>
<comment type="miscellaneous">
    <text evidence="1">When the channel is activated, one or more imidazole moieties of His-37 probably become bi-protonated.</text>
</comment>
<comment type="similarity">
    <text evidence="1">Belongs to the influenza viruses matrix protein M2 family.</text>
</comment>
<feature type="chain" id="PRO_0000326341" description="Matrix protein 2">
    <location>
        <begin position="1"/>
        <end position="97"/>
    </location>
</feature>
<feature type="topological domain" description="Virion surface" evidence="1">
    <location>
        <begin position="1"/>
        <end position="22"/>
    </location>
</feature>
<feature type="transmembrane region" description="Helical; Signal-anchor for type III membrane protein" evidence="1">
    <location>
        <begin position="23"/>
        <end position="43"/>
    </location>
</feature>
<feature type="topological domain" description="Intravirion" evidence="1">
    <location>
        <begin position="44"/>
        <end position="97"/>
    </location>
</feature>
<feature type="region of interest" description="Disordered" evidence="2">
    <location>
        <begin position="59"/>
        <end position="88"/>
    </location>
</feature>
<feature type="site" description="Essential for channel activity, possibly by being protonated during channel activation, and by forming the channel gate and the selective filter" evidence="1">
    <location>
        <position position="37"/>
    </location>
</feature>
<feature type="site" description="Seems to be involved in pH gating" evidence="1">
    <location>
        <position position="41"/>
    </location>
</feature>
<feature type="modified residue" description="Phosphoserine; by host" evidence="1">
    <location>
        <position position="64"/>
    </location>
</feature>
<feature type="modified residue" description="Phosphoserine; by host" evidence="1">
    <location>
        <position position="82"/>
    </location>
</feature>
<feature type="modified residue" description="Phosphoserine; by host" evidence="1">
    <location>
        <position position="93"/>
    </location>
</feature>
<feature type="lipid moiety-binding region" description="S-palmitoyl cysteine; by host" evidence="1">
    <location>
        <position position="50"/>
    </location>
</feature>
<feature type="glycosylation site" description="N-linked (GlcNAc...) asparagine; by host" evidence="1">
    <location>
        <position position="20"/>
    </location>
</feature>
<feature type="disulfide bond" description="Interchain (with C-17)" evidence="1">
    <location>
        <position position="17"/>
    </location>
</feature>
<feature type="disulfide bond" description="Interchain (with C-19)" evidence="1">
    <location>
        <position position="19"/>
    </location>
</feature>
<feature type="sequence conflict" description="In Ref. 2; ABF21301." ref="2">
    <original>D</original>
    <variation>N</variation>
    <location>
        <position position="44"/>
    </location>
</feature>
<feature type="sequence conflict" description="In Ref. 2; ABF21301." ref="2">
    <original>N</original>
    <variation>K</variation>
    <location>
        <position position="78"/>
    </location>
</feature>
<feature type="sequence conflict" description="In Ref. 2; ABF21301." ref="2">
    <original>G</original>
    <variation>S</variation>
    <location>
        <position position="89"/>
    </location>
</feature>
<organism>
    <name type="scientific">Influenza A virus (strain A/Japan/305/1957 H2N2)</name>
    <dbReference type="NCBI Taxonomy" id="387161"/>
    <lineage>
        <taxon>Viruses</taxon>
        <taxon>Riboviria</taxon>
        <taxon>Orthornavirae</taxon>
        <taxon>Negarnaviricota</taxon>
        <taxon>Polyploviricotina</taxon>
        <taxon>Insthoviricetes</taxon>
        <taxon>Articulavirales</taxon>
        <taxon>Orthomyxoviridae</taxon>
        <taxon>Alphainfluenzavirus</taxon>
        <taxon>Alphainfluenzavirus influenzae</taxon>
        <taxon>Influenza A virus</taxon>
    </lineage>
</organism>
<accession>Q6XU12</accession>
<accession>Q1K9Q0</accession>
<sequence length="97" mass="11141">MSLLTEVETPIRNEWGCRCNDSSDPLVVAASIIGILHLILWILDRLFFKCIYRFFKHGLKRGPSTEGVPESMREEYRNEQQSAVDADDGHFVSIELE</sequence>
<organismHost>
    <name type="scientific">Aves</name>
    <dbReference type="NCBI Taxonomy" id="8782"/>
</organismHost>
<organismHost>
    <name type="scientific">Homo sapiens</name>
    <name type="common">Human</name>
    <dbReference type="NCBI Taxonomy" id="9606"/>
</organismHost>
<proteinExistence type="inferred from homology"/>
<evidence type="ECO:0000255" key="1">
    <source>
        <dbReference type="HAMAP-Rule" id="MF_04069"/>
    </source>
</evidence>
<evidence type="ECO:0000256" key="2">
    <source>
        <dbReference type="SAM" id="MobiDB-lite"/>
    </source>
</evidence>